<proteinExistence type="inferred from homology"/>
<evidence type="ECO:0000255" key="1">
    <source>
        <dbReference type="HAMAP-Rule" id="MF_01270"/>
    </source>
</evidence>
<protein>
    <recommendedName>
        <fullName evidence="1">Anhydro-N-acetylmuramic acid kinase</fullName>
        <ecNumber evidence="1">2.7.1.170</ecNumber>
    </recommendedName>
    <alternativeName>
        <fullName evidence="1">AnhMurNAc kinase</fullName>
    </alternativeName>
</protein>
<keyword id="KW-0067">ATP-binding</keyword>
<keyword id="KW-0119">Carbohydrate metabolism</keyword>
<keyword id="KW-0418">Kinase</keyword>
<keyword id="KW-0547">Nucleotide-binding</keyword>
<keyword id="KW-1185">Reference proteome</keyword>
<keyword id="KW-0808">Transferase</keyword>
<name>ANMK_HAEIN</name>
<comment type="function">
    <text evidence="1">Catalyzes the specific phosphorylation of 1,6-anhydro-N-acetylmuramic acid (anhMurNAc) with the simultaneous cleavage of the 1,6-anhydro ring, generating MurNAc-6-P. Is required for the utilization of anhMurNAc either imported from the medium or derived from its own cell wall murein, and thus plays a role in cell wall recycling.</text>
</comment>
<comment type="catalytic activity">
    <reaction evidence="1">
        <text>1,6-anhydro-N-acetyl-beta-muramate + ATP + H2O = N-acetyl-D-muramate 6-phosphate + ADP + H(+)</text>
        <dbReference type="Rhea" id="RHEA:24952"/>
        <dbReference type="ChEBI" id="CHEBI:15377"/>
        <dbReference type="ChEBI" id="CHEBI:15378"/>
        <dbReference type="ChEBI" id="CHEBI:30616"/>
        <dbReference type="ChEBI" id="CHEBI:58690"/>
        <dbReference type="ChEBI" id="CHEBI:58722"/>
        <dbReference type="ChEBI" id="CHEBI:456216"/>
        <dbReference type="EC" id="2.7.1.170"/>
    </reaction>
</comment>
<comment type="pathway">
    <text evidence="1">Amino-sugar metabolism; 1,6-anhydro-N-acetylmuramate degradation.</text>
</comment>
<comment type="pathway">
    <text evidence="1">Cell wall biogenesis; peptidoglycan recycling.</text>
</comment>
<comment type="similarity">
    <text evidence="1">Belongs to the anhydro-N-acetylmuramic acid kinase family.</text>
</comment>
<reference key="1">
    <citation type="journal article" date="1995" name="Science">
        <title>Whole-genome random sequencing and assembly of Haemophilus influenzae Rd.</title>
        <authorList>
            <person name="Fleischmann R.D."/>
            <person name="Adams M.D."/>
            <person name="White O."/>
            <person name="Clayton R.A."/>
            <person name="Kirkness E.F."/>
            <person name="Kerlavage A.R."/>
            <person name="Bult C.J."/>
            <person name="Tomb J.-F."/>
            <person name="Dougherty B.A."/>
            <person name="Merrick J.M."/>
            <person name="McKenney K."/>
            <person name="Sutton G.G."/>
            <person name="FitzHugh W."/>
            <person name="Fields C.A."/>
            <person name="Gocayne J.D."/>
            <person name="Scott J.D."/>
            <person name="Shirley R."/>
            <person name="Liu L.-I."/>
            <person name="Glodek A."/>
            <person name="Kelley J.M."/>
            <person name="Weidman J.F."/>
            <person name="Phillips C.A."/>
            <person name="Spriggs T."/>
            <person name="Hedblom E."/>
            <person name="Cotton M.D."/>
            <person name="Utterback T.R."/>
            <person name="Hanna M.C."/>
            <person name="Nguyen D.T."/>
            <person name="Saudek D.M."/>
            <person name="Brandon R.C."/>
            <person name="Fine L.D."/>
            <person name="Fritchman J.L."/>
            <person name="Fuhrmann J.L."/>
            <person name="Geoghagen N.S.M."/>
            <person name="Gnehm C.L."/>
            <person name="McDonald L.A."/>
            <person name="Small K.V."/>
            <person name="Fraser C.M."/>
            <person name="Smith H.O."/>
            <person name="Venter J.C."/>
        </authorList>
    </citation>
    <scope>NUCLEOTIDE SEQUENCE [LARGE SCALE GENOMIC DNA]</scope>
    <source>
        <strain>ATCC 51907 / DSM 11121 / KW20 / Rd</strain>
    </source>
</reference>
<accession>P44861</accession>
<dbReference type="EC" id="2.7.1.170" evidence="1"/>
<dbReference type="EMBL" id="L42023">
    <property type="protein sequence ID" value="AAC22412.1"/>
    <property type="molecule type" value="Genomic_DNA"/>
</dbReference>
<dbReference type="PIR" id="B64158">
    <property type="entry name" value="B64158"/>
</dbReference>
<dbReference type="RefSeq" id="NP_438912.1">
    <property type="nucleotide sequence ID" value="NC_000907.1"/>
</dbReference>
<dbReference type="SMR" id="P44861"/>
<dbReference type="STRING" id="71421.HI_0753"/>
<dbReference type="EnsemblBacteria" id="AAC22412">
    <property type="protein sequence ID" value="AAC22412"/>
    <property type="gene ID" value="HI_0753"/>
</dbReference>
<dbReference type="KEGG" id="hin:HI_0753"/>
<dbReference type="PATRIC" id="fig|71421.8.peg.791"/>
<dbReference type="eggNOG" id="COG2377">
    <property type="taxonomic scope" value="Bacteria"/>
</dbReference>
<dbReference type="HOGENOM" id="CLU_038782_0_0_6"/>
<dbReference type="OrthoDB" id="9763949at2"/>
<dbReference type="PhylomeDB" id="P44861"/>
<dbReference type="BioCyc" id="HINF71421:G1GJ1-791-MONOMER"/>
<dbReference type="UniPathway" id="UPA00343"/>
<dbReference type="UniPathway" id="UPA00544"/>
<dbReference type="Proteomes" id="UP000000579">
    <property type="component" value="Chromosome"/>
</dbReference>
<dbReference type="GO" id="GO:0005524">
    <property type="term" value="F:ATP binding"/>
    <property type="evidence" value="ECO:0007669"/>
    <property type="project" value="UniProtKB-UniRule"/>
</dbReference>
<dbReference type="GO" id="GO:0016301">
    <property type="term" value="F:kinase activity"/>
    <property type="evidence" value="ECO:0000318"/>
    <property type="project" value="GO_Central"/>
</dbReference>
<dbReference type="GO" id="GO:0016773">
    <property type="term" value="F:phosphotransferase activity, alcohol group as acceptor"/>
    <property type="evidence" value="ECO:0007669"/>
    <property type="project" value="UniProtKB-UniRule"/>
</dbReference>
<dbReference type="GO" id="GO:0097175">
    <property type="term" value="P:1,6-anhydro-N-acetyl-beta-muramic acid catabolic process"/>
    <property type="evidence" value="ECO:0007669"/>
    <property type="project" value="UniProtKB-UniRule"/>
</dbReference>
<dbReference type="GO" id="GO:0006040">
    <property type="term" value="P:amino sugar metabolic process"/>
    <property type="evidence" value="ECO:0007669"/>
    <property type="project" value="InterPro"/>
</dbReference>
<dbReference type="GO" id="GO:0009254">
    <property type="term" value="P:peptidoglycan turnover"/>
    <property type="evidence" value="ECO:0007669"/>
    <property type="project" value="UniProtKB-UniRule"/>
</dbReference>
<dbReference type="CDD" id="cd24050">
    <property type="entry name" value="ASKHA_NBD_ANMK"/>
    <property type="match status" value="1"/>
</dbReference>
<dbReference type="Gene3D" id="3.30.420.40">
    <property type="match status" value="2"/>
</dbReference>
<dbReference type="HAMAP" id="MF_01270">
    <property type="entry name" value="AnhMurNAc_kinase"/>
    <property type="match status" value="1"/>
</dbReference>
<dbReference type="InterPro" id="IPR005338">
    <property type="entry name" value="Anhydro_N_Ac-Mur_kinase"/>
</dbReference>
<dbReference type="InterPro" id="IPR043129">
    <property type="entry name" value="ATPase_NBD"/>
</dbReference>
<dbReference type="NCBIfam" id="NF007139">
    <property type="entry name" value="PRK09585.1-3"/>
    <property type="match status" value="1"/>
</dbReference>
<dbReference type="PANTHER" id="PTHR30605">
    <property type="entry name" value="ANHYDRO-N-ACETYLMURAMIC ACID KINASE"/>
    <property type="match status" value="1"/>
</dbReference>
<dbReference type="PANTHER" id="PTHR30605:SF0">
    <property type="entry name" value="ANHYDRO-N-ACETYLMURAMIC ACID KINASE"/>
    <property type="match status" value="1"/>
</dbReference>
<dbReference type="Pfam" id="PF03702">
    <property type="entry name" value="AnmK"/>
    <property type="match status" value="1"/>
</dbReference>
<dbReference type="SUPFAM" id="SSF53067">
    <property type="entry name" value="Actin-like ATPase domain"/>
    <property type="match status" value="1"/>
</dbReference>
<sequence>MINMKPQYYLGMMSGTSLDGVDIVLVDFSQDPQLILSDFFPMPEDLREKLTTLIQVGETTLQNLGELDHKLALLYSDCVNAFLQKNTFLPNQIQAIGCHGQTVWHSPNSQFPFTMQLGDMNLLAAKTGISVIGDFRRKDMAWGGQGAPLVPAFHEAVFSNSNFATAVLNIGGISNVSILFPNQAVIGFDTGPGNTLLDQWIEKHQGLRYDENGEWAAKGNVNKVLLDELLNEPFFSLPAPKSTGRELFNLVWLNHKIAKIREKLTALSVEMSFRPEDVQATLVELTVTSIVNALNQLQTDLPKRLLVCGGGAKNSLIMRGLHDNLLDWQVSTTTEQGFDIDYVEAAAFAWLAYCRINNLPANLPSVTGAKSAVSLGAIFPKD</sequence>
<feature type="chain" id="PRO_0000214822" description="Anhydro-N-acetylmuramic acid kinase">
    <location>
        <begin position="1"/>
        <end position="382"/>
    </location>
</feature>
<feature type="binding site" evidence="1">
    <location>
        <begin position="15"/>
        <end position="22"/>
    </location>
    <ligand>
        <name>ATP</name>
        <dbReference type="ChEBI" id="CHEBI:30616"/>
    </ligand>
</feature>
<gene>
    <name evidence="1" type="primary">anmK</name>
    <name type="ordered locus">HI_0753</name>
</gene>
<organism>
    <name type="scientific">Haemophilus influenzae (strain ATCC 51907 / DSM 11121 / KW20 / Rd)</name>
    <dbReference type="NCBI Taxonomy" id="71421"/>
    <lineage>
        <taxon>Bacteria</taxon>
        <taxon>Pseudomonadati</taxon>
        <taxon>Pseudomonadota</taxon>
        <taxon>Gammaproteobacteria</taxon>
        <taxon>Pasteurellales</taxon>
        <taxon>Pasteurellaceae</taxon>
        <taxon>Haemophilus</taxon>
    </lineage>
</organism>